<organism>
    <name type="scientific">Xenopus laevis</name>
    <name type="common">African clawed frog</name>
    <dbReference type="NCBI Taxonomy" id="8355"/>
    <lineage>
        <taxon>Eukaryota</taxon>
        <taxon>Metazoa</taxon>
        <taxon>Chordata</taxon>
        <taxon>Craniata</taxon>
        <taxon>Vertebrata</taxon>
        <taxon>Euteleostomi</taxon>
        <taxon>Amphibia</taxon>
        <taxon>Batrachia</taxon>
        <taxon>Anura</taxon>
        <taxon>Pipoidea</taxon>
        <taxon>Pipidae</taxon>
        <taxon>Xenopodinae</taxon>
        <taxon>Xenopus</taxon>
        <taxon>Xenopus</taxon>
    </lineage>
</organism>
<comment type="function">
    <text evidence="1 6 7 8">Serine/threonine protein kinase which activates checkpoint signaling upon genotoxic stresses such as ionizing radiation (IR), ultraviolet light (UV), or DNA replication stalling, thereby acting as a DNA damage sensor (PubMed:11069891, PubMed:11137007, PubMed:16530042). Recognizes the substrate consensus sequence [ST]-Q (PubMed:11069891, PubMed:11137007, PubMed:16530042). Phosphorylates BRCA1, CHEK1, MCM2, RAD17, RPA2, SMC1 and p53/TP53, which collectively inhibit DNA replication and mitosis and promote DNA repair, recombination and apoptosis (PubMed:11069891, PubMed:11137007, PubMed:16530042). Phosphorylates 'Ser-139' of histone variant H2AX at sites of DNA damage, thereby regulating DNA damage response mechanism (By similarity). Acts as a regulator of the nuclear envelope integrity in response to DNA damage and stress (By similarity).</text>
</comment>
<comment type="catalytic activity">
    <reaction evidence="1">
        <text>L-seryl-[protein] + ATP = O-phospho-L-seryl-[protein] + ADP + H(+)</text>
        <dbReference type="Rhea" id="RHEA:17989"/>
        <dbReference type="Rhea" id="RHEA-COMP:9863"/>
        <dbReference type="Rhea" id="RHEA-COMP:11604"/>
        <dbReference type="ChEBI" id="CHEBI:15378"/>
        <dbReference type="ChEBI" id="CHEBI:29999"/>
        <dbReference type="ChEBI" id="CHEBI:30616"/>
        <dbReference type="ChEBI" id="CHEBI:83421"/>
        <dbReference type="ChEBI" id="CHEBI:456216"/>
        <dbReference type="EC" id="2.7.11.1"/>
    </reaction>
    <physiologicalReaction direction="left-to-right" evidence="1">
        <dbReference type="Rhea" id="RHEA:17990"/>
    </physiologicalReaction>
</comment>
<comment type="catalytic activity">
    <reaction evidence="1">
        <text>L-threonyl-[protein] + ATP = O-phospho-L-threonyl-[protein] + ADP + H(+)</text>
        <dbReference type="Rhea" id="RHEA:46608"/>
        <dbReference type="Rhea" id="RHEA-COMP:11060"/>
        <dbReference type="Rhea" id="RHEA-COMP:11605"/>
        <dbReference type="ChEBI" id="CHEBI:15378"/>
        <dbReference type="ChEBI" id="CHEBI:30013"/>
        <dbReference type="ChEBI" id="CHEBI:30616"/>
        <dbReference type="ChEBI" id="CHEBI:61977"/>
        <dbReference type="ChEBI" id="CHEBI:456216"/>
        <dbReference type="EC" id="2.7.11.1"/>
    </reaction>
    <physiologicalReaction direction="left-to-right" evidence="1">
        <dbReference type="Rhea" id="RHEA:46609"/>
    </physiologicalReaction>
</comment>
<comment type="cofactor">
    <cofactor evidence="1">
        <name>Mn(2+)</name>
        <dbReference type="ChEBI" id="CHEBI:29035"/>
    </cofactor>
</comment>
<comment type="activity regulation">
    <text evidence="8">Kinase activity is activated by topbp1.</text>
</comment>
<comment type="subunit">
    <text evidence="8">Forms a heterodimer with atrip. Interacts with topbp1 in the presence of atrip.</text>
</comment>
<comment type="subcellular location">
    <subcellularLocation>
        <location evidence="6">Nucleus</location>
    </subcellularLocation>
    <subcellularLocation>
        <location evidence="1">Chromosome</location>
    </subcellularLocation>
    <subcellularLocation>
        <location evidence="1">Nucleus envelope</location>
    </subcellularLocation>
    <text evidence="1">Recruited to chromatin during S-phase. Redistributes to discrete nuclear foci upon DNA damage, hypoxia or replication fork stalling. Relocalizes to the nuclear envelope in response to mechanical stress or DNA damage.</text>
</comment>
<comment type="similarity">
    <text evidence="9">Belongs to the PI3/PI4-kinase family. ATM subfamily.</text>
</comment>
<proteinExistence type="evidence at protein level"/>
<name>ATR_XENLA</name>
<keyword id="KW-0067">ATP-binding</keyword>
<keyword id="KW-0158">Chromosome</keyword>
<keyword id="KW-0227">DNA damage</keyword>
<keyword id="KW-0234">DNA repair</keyword>
<keyword id="KW-0238">DNA-binding</keyword>
<keyword id="KW-0418">Kinase</keyword>
<keyword id="KW-0464">Manganese</keyword>
<keyword id="KW-0547">Nucleotide-binding</keyword>
<keyword id="KW-0539">Nucleus</keyword>
<keyword id="KW-0597">Phosphoprotein</keyword>
<keyword id="KW-1185">Reference proteome</keyword>
<keyword id="KW-0677">Repeat</keyword>
<keyword id="KW-0723">Serine/threonine-protein kinase</keyword>
<keyword id="KW-0808">Transferase</keyword>
<gene>
    <name type="primary">atr</name>
</gene>
<sequence length="2654" mass="301459">MATDPGLEMASMIPALRELASAGAEEYNTTVQKPRQILCQFIDRILTDVDVVAVELSKNTDSQPSSVMLLDFIQHIMKSTPLMFLSANNGDQSAETNQNCVAFSNWIISRLLRIGATPSCKALHRKIAEVIRSLLFLFKNKSSFLFGVFTKDLLHLFEDLIYIHEQNMEKSVVWPVTISRFLSNASENQTYLRCTQFQLLNMQNIEPLESTLLMVLMDNEHDISPVFFQRQNLLLWGIGCSLLDYGSTPLKIQALHFLRQLIKLGGPPEQGAYFFFIVFFGILTCIKDMDLEEVSLYEMPLLKLVKVLFPFESKSYLNIEPVYLNMLLEKLAALFDGGILSNIQSAPLKEALCYMVHYFLSIVPPGYESAKEVREAHVRCICRAFVDVLGLQSKQEYLVCPLHEALRIENLVFMQQQRMQPLSTDSEGGGSSSSDEVQEKRPRLSLTAKPLRRNTPSVPAPVDMKTKSILWKAVSAKFSSILCKLEGDEVTDEEMVSLLEGLNTTVRVAALNTVHIFTNDSTDTDQLVSDLSNTSGIQSVEIVPHVFWLSPEDILKILKICRKVLDSAHQRANINDILMKIIKIFDAILYIHAGNRLNDQTLKDLCSMISLPWLQNHSNHASFKVASFDPTLMTISERIGQHYSPEIQSQLVFLLCLFPKMLCPEWRLAVYQWALDSPHEIVRARCIKGFPVLLCNVSQQGYGPIPKILIDCLNDASELVKKELANSVGMFASGLACGFELQYSPTAPTAAESEFLCSSLTVTALPSSKLSRMTASALKPFLALLNRNMPSSVKMAFIENMPMLFAHLSLEKDDLDSRTVIESLLNLMEDPDKDVRTAFSGNIKHLLACADCEDGYLKEIVVSRMKKAYTDAKMSRDNEMKDTLILTTGDIGRAAKGELVPFALLHLLHCLLSKSPCVAGASYTEIRSLAAAKSTSLHIFFSQYKKPICQFLIESLHSSQAALLTNTPGRSSEMQKQEATHHREAALDILSEIANVFDFPDLNRFLTRTLQLLLPYLAAKASPTASTLIRTIAKQLNVNRREILINNFKYIFSHLVCSCTKDELEKSLHYLKNETEIELGSLLRQDYQGLHNELLLRLGEHYQQVFSGLSILATYASNDDPYQGPRNFAKPEIMADYLQPKLLGILAFFNMHLLSSSIGIEDKKMALNSLVSLMKLMGPKHISSVRVKMMTTLRTGLRYKEEFPGLCCSAWDLFVRCLDQAYLGPLLSHVIVALLPLLHIQPKETVAVFRYLIVENRDAVQDFLHEIYFLPDHPELKEIQKVLQEYRKETTKSTDLQTAMQLSIRAIQHENVDVRMHALTSLKETLYKNQAKLLQYSTDSETVEPVISQLVTVLLIGCQDANPQARLFCGECLGQLGAIDPGRLDFSPSETQGKGFTFVSGVEDSDFAYELLTEQTRAFLAYADNVRAQDSAAYAIQELLSIFECKEGRTDCPGRRLWRRFPEHVQEILEPHLNTRYKSSRKAVNWSRVKKPIYLSKLGNNFADWSATWAGYLITKVRHELARRVFSCCSIMMKHDFKVTIYLLPHILVYVLLGCNKEDQQEVYAEIMAVLKHEDPLMRRLQDSASDLSQLSTQTVFSMLDHLTQWAREKFQALNAEKTNPKPGTRGEPKAVSNEDYGEYQNVTRFLDLIPQDTLAVASFRSKAYTRALMHFESFIMEKKQEIQEHLGFLQKLYAAMHEPDGVAGVSAIRKKEASLKEQILEHESIGLLRDATACYDRAIQLKPEEIIHYHGVVKSMLGLGQLSTVITQVNGILNSRSEWTAELNTYRVEAAWKLSQWDLVEEYLSADRKSTTWSIRLGQLLLSAKKGERDMFYETLKVVRAEQIVPLSAASFERGSYQRGYEYIVRLHMLCELEHSVKMFLQKPSVEPAVDSLNLPARLEMTQNSYRAREPILAVRRALQTINKRPNHADMIGECWLQSARVARKAGHHQTAYNALLNAGESRLSELNVERAKWLWSKGDVHQALIVLQKGAELFLSSTSAPPEQQLIHGRAMLLVGRLMEETANFESNAVMKKYKDVTALLPEWEDGHFYLAKYYDKLMPMVTDNKMEKQGDLIRYIVLHFGRSLQFGNQYIYQSMPRMLSLWLDFGAKVYEWEKAGRADRLQMKNELMKINKVISDHKNQLAPYQFLTAFSQLISRICHSHDEVFAVLMEIVAKVFVAYPQQAMWMMTAVSKSSYPMRVNRCKEILEKAIHMKPSLGKFIGDATRLTDKLLELCNKPVDGNTSTLSMNIHFKMLKKLVEETTFSEILIPLQSVMIPTLPSTAGKRDHADHDPFPGHWAYLSGFDDAVEILPSLQKPKKISLKGSDGKSYIMMCKPKDDLRKDCRLMEFNSLINKCLRKDAESRRRELHIRTYAVIPLNDECGIIEWVNNTAGFRNILIKLYKEKGIYMGGKELRQCMLPKSAPLQEKLKVFKEALLPRHPPLFHEWFLRTFPDPTSWYNSRSAYCRSTAVMSMVGYILGLGDRHGENILFDSLTGECVHVDFNCLFNKGETFEVPEIVPFRLTHNMVNGMGPMGTEGLFRRACEVIMRLMREQRESLMSVLKPFLHDPLVEWSKPARGSSKGQVNETGEVMNEKAKTHVLDIEQRLQGVIKTRNRVKGLPLSIEGHVHYLIQEATDENLLSQMYLGWAPYM</sequence>
<evidence type="ECO:0000250" key="1">
    <source>
        <dbReference type="UniProtKB" id="Q13535"/>
    </source>
</evidence>
<evidence type="ECO:0000255" key="2">
    <source>
        <dbReference type="PROSITE-ProRule" id="PRU00269"/>
    </source>
</evidence>
<evidence type="ECO:0000255" key="3">
    <source>
        <dbReference type="PROSITE-ProRule" id="PRU00534"/>
    </source>
</evidence>
<evidence type="ECO:0000255" key="4">
    <source>
        <dbReference type="PROSITE-ProRule" id="PRU00535"/>
    </source>
</evidence>
<evidence type="ECO:0000256" key="5">
    <source>
        <dbReference type="SAM" id="MobiDB-lite"/>
    </source>
</evidence>
<evidence type="ECO:0000269" key="6">
    <source>
    </source>
</evidence>
<evidence type="ECO:0000269" key="7">
    <source>
    </source>
</evidence>
<evidence type="ECO:0000269" key="8">
    <source>
    </source>
</evidence>
<evidence type="ECO:0000305" key="9"/>
<reference key="1">
    <citation type="journal article" date="2000" name="Curr. Biol.">
        <title>Xenopus ATR is a replication-dependent chromatin binding protein required for the DNA replication checkpoint.</title>
        <authorList>
            <person name="Hekmat-Nejad M."/>
            <person name="You Z."/>
            <person name="Yee M.-C."/>
            <person name="Newport J."/>
            <person name="Cimprich K.A."/>
        </authorList>
    </citation>
    <scope>NUCLEOTIDE SEQUENCE [MRNA]</scope>
    <scope>FUNCTION</scope>
</reference>
<reference key="2">
    <citation type="journal article" date="2000" name="Genes Dev.">
        <title>Requirement for Atr in phosphorylation of Chk1 and cell cycle regulation in response to DNA replication blocks and UV-damaged DNA in Xenopus egg extracts.</title>
        <authorList>
            <person name="Guo Z."/>
            <person name="Kumagai A."/>
            <person name="Wang S.X."/>
            <person name="Dunphy W.G."/>
        </authorList>
    </citation>
    <scope>NUCLEOTIDE SEQUENCE [MRNA]</scope>
    <scope>FUNCTION</scope>
    <scope>SUBCELLULAR LOCATION</scope>
</reference>
<reference key="3">
    <citation type="submission" date="2005-01" db="EMBL/GenBank/DDBJ databases">
        <title>Characterization of Xenopus ATR.</title>
        <authorList>
            <person name="McSherry T.D."/>
            <person name="Mueller P.R."/>
        </authorList>
    </citation>
    <scope>NUCLEOTIDE SEQUENCE [MRNA]</scope>
</reference>
<reference key="4">
    <citation type="journal article" date="2006" name="Cell">
        <title>TopBP1 activates the ATR-ATRIP complex.</title>
        <authorList>
            <person name="Kumagai A."/>
            <person name="Lee J."/>
            <person name="Yoo H.Y."/>
            <person name="Dunphy W.G."/>
        </authorList>
    </citation>
    <scope>FUNCTION</scope>
    <scope>ACTIVITY REGULATION</scope>
    <scope>INTERACTION WITH ATRIP</scope>
    <scope>INTERACTION WITH TOPBP1</scope>
</reference>
<protein>
    <recommendedName>
        <fullName>Serine/threonine-protein kinase atr</fullName>
        <shortName>Xatr</shortName>
        <ecNumber>2.7.11.1</ecNumber>
    </recommendedName>
    <alternativeName>
        <fullName>Ataxia telangiectasia and Rad3-related protein</fullName>
    </alternativeName>
</protein>
<feature type="chain" id="PRO_0000225628" description="Serine/threonine-protein kinase atr">
    <location>
        <begin position="1"/>
        <end position="2654"/>
    </location>
</feature>
<feature type="repeat" description="HEAT 1">
    <location>
        <begin position="814"/>
        <end position="850"/>
    </location>
</feature>
<feature type="repeat" description="HEAT 2">
    <location>
        <begin position="1344"/>
        <end position="1380"/>
    </location>
</feature>
<feature type="domain" description="FAT" evidence="3">
    <location>
        <begin position="1654"/>
        <end position="2196"/>
    </location>
</feature>
<feature type="domain" description="PI3K/PI4K catalytic" evidence="2">
    <location>
        <begin position="2306"/>
        <end position="2614"/>
    </location>
</feature>
<feature type="domain" description="FATC" evidence="3 4">
    <location>
        <begin position="2622"/>
        <end position="2654"/>
    </location>
</feature>
<feature type="region of interest" description="Disordered" evidence="5">
    <location>
        <begin position="421"/>
        <end position="459"/>
    </location>
</feature>
<feature type="region of interest" description="G-loop" evidence="2">
    <location>
        <begin position="2312"/>
        <end position="2318"/>
    </location>
</feature>
<feature type="region of interest" description="Catalytic loop" evidence="2">
    <location>
        <begin position="2482"/>
        <end position="2490"/>
    </location>
</feature>
<feature type="region of interest" description="Activation loop" evidence="2">
    <location>
        <begin position="2502"/>
        <end position="2526"/>
    </location>
</feature>
<feature type="sequence conflict" description="In Ref. 2; AAG34794." evidence="9" ref="2">
    <original>Y</original>
    <variation>C</variation>
    <location>
        <position position="191"/>
    </location>
</feature>
<feature type="sequence conflict" description="In Ref. 2; AAG34794." evidence="9" ref="2">
    <original>P</original>
    <variation>S</variation>
    <location>
        <position position="249"/>
    </location>
</feature>
<feature type="sequence conflict" description="In Ref. 3; AAW78662." evidence="9" ref="3">
    <original>S</original>
    <variation>SS</variation>
    <location>
        <position position="434"/>
    </location>
</feature>
<feature type="sequence conflict" description="In Ref. 3; AAW78662." evidence="9" ref="3">
    <original>D</original>
    <variation>N</variation>
    <location>
        <position position="520"/>
    </location>
</feature>
<feature type="sequence conflict" description="In Ref. 3; AAW78662." evidence="9" ref="3">
    <original>N</original>
    <variation>S</variation>
    <location>
        <position position="1047"/>
    </location>
</feature>
<feature type="sequence conflict" description="In Ref. 3; AAW78662." evidence="9" ref="3">
    <original>L</original>
    <variation>P</variation>
    <location>
        <position position="1543"/>
    </location>
</feature>
<feature type="sequence conflict" description="In Ref. 1; AAG40002." evidence="9" ref="1">
    <original>N</original>
    <variation>S</variation>
    <location>
        <position position="1785"/>
    </location>
</feature>
<feature type="sequence conflict" description="In Ref. 3; AAW78662." evidence="9" ref="3">
    <original>T</original>
    <variation>A</variation>
    <location>
        <position position="1952"/>
    </location>
</feature>
<feature type="sequence conflict" description="In Ref. 2; AAG34794." evidence="9" ref="2">
    <original>H</original>
    <variation>P</variation>
    <location>
        <position position="2082"/>
    </location>
</feature>
<feature type="sequence conflict" description="In Ref. 3; AAW78662." evidence="9" ref="3">
    <original>M</original>
    <variation>T</variation>
    <location>
        <position position="2215"/>
    </location>
</feature>
<feature type="sequence conflict" description="In Ref. 2; AAG34794." evidence="9" ref="2">
    <original>D</original>
    <variation>G</variation>
    <location>
        <position position="2362"/>
    </location>
</feature>
<feature type="sequence conflict" description="In Ref. 1; AAG40002." evidence="9" ref="1">
    <original>S</original>
    <variation>N</variation>
    <location>
        <position position="2424"/>
    </location>
</feature>
<dbReference type="EC" id="2.7.11.1"/>
<dbReference type="EMBL" id="AF320125">
    <property type="protein sequence ID" value="AAG40002.1"/>
    <property type="molecule type" value="mRNA"/>
</dbReference>
<dbReference type="EMBL" id="AF223644">
    <property type="protein sequence ID" value="AAG34794.1"/>
    <property type="molecule type" value="mRNA"/>
</dbReference>
<dbReference type="EMBL" id="AY882989">
    <property type="protein sequence ID" value="AAW78662.1"/>
    <property type="molecule type" value="mRNA"/>
</dbReference>
<dbReference type="RefSeq" id="NP_001082049.1">
    <property type="nucleotide sequence ID" value="NM_001088580.1"/>
</dbReference>
<dbReference type="SMR" id="Q9DE14"/>
<dbReference type="BioGRID" id="99532">
    <property type="interactions" value="6"/>
</dbReference>
<dbReference type="IntAct" id="Q9DE14">
    <property type="interactions" value="2"/>
</dbReference>
<dbReference type="iPTMnet" id="Q9DE14"/>
<dbReference type="GeneID" id="398197"/>
<dbReference type="KEGG" id="xla:398197"/>
<dbReference type="AGR" id="Xenbase:XB-GENE-1012725"/>
<dbReference type="CTD" id="398197"/>
<dbReference type="Xenbase" id="XB-GENE-1012725">
    <property type="gene designation" value="atr.L"/>
</dbReference>
<dbReference type="OMA" id="SMYIGWC"/>
<dbReference type="OrthoDB" id="381190at2759"/>
<dbReference type="Proteomes" id="UP000186698">
    <property type="component" value="Chromosome 5L"/>
</dbReference>
<dbReference type="Bgee" id="398197">
    <property type="expression patterns" value="Expressed in egg cell and 19 other cell types or tissues"/>
</dbReference>
<dbReference type="GO" id="GO:0005694">
    <property type="term" value="C:chromosome"/>
    <property type="evidence" value="ECO:0000318"/>
    <property type="project" value="GO_Central"/>
</dbReference>
<dbReference type="GO" id="GO:0005635">
    <property type="term" value="C:nuclear envelope"/>
    <property type="evidence" value="ECO:0000250"/>
    <property type="project" value="UniProtKB"/>
</dbReference>
<dbReference type="GO" id="GO:0005634">
    <property type="term" value="C:nucleus"/>
    <property type="evidence" value="ECO:0000318"/>
    <property type="project" value="GO_Central"/>
</dbReference>
<dbReference type="GO" id="GO:0016605">
    <property type="term" value="C:PML body"/>
    <property type="evidence" value="ECO:0000250"/>
    <property type="project" value="UniProtKB"/>
</dbReference>
<dbReference type="GO" id="GO:0090734">
    <property type="term" value="C:site of DNA damage"/>
    <property type="evidence" value="ECO:0000250"/>
    <property type="project" value="UniProtKB"/>
</dbReference>
<dbReference type="GO" id="GO:0005524">
    <property type="term" value="F:ATP binding"/>
    <property type="evidence" value="ECO:0007669"/>
    <property type="project" value="UniProtKB-KW"/>
</dbReference>
<dbReference type="GO" id="GO:0003677">
    <property type="term" value="F:DNA binding"/>
    <property type="evidence" value="ECO:0007669"/>
    <property type="project" value="UniProtKB-KW"/>
</dbReference>
<dbReference type="GO" id="GO:0035979">
    <property type="term" value="F:histone H2AXS139 kinase activity"/>
    <property type="evidence" value="ECO:0000250"/>
    <property type="project" value="UniProtKB"/>
</dbReference>
<dbReference type="GO" id="GO:0046982">
    <property type="term" value="F:protein heterodimerization activity"/>
    <property type="evidence" value="ECO:0000353"/>
    <property type="project" value="UniProtKB"/>
</dbReference>
<dbReference type="GO" id="GO:0106310">
    <property type="term" value="F:protein serine kinase activity"/>
    <property type="evidence" value="ECO:0007669"/>
    <property type="project" value="RHEA"/>
</dbReference>
<dbReference type="GO" id="GO:0004674">
    <property type="term" value="F:protein serine/threonine kinase activity"/>
    <property type="evidence" value="ECO:0000314"/>
    <property type="project" value="UniProtKB"/>
</dbReference>
<dbReference type="GO" id="GO:0000077">
    <property type="term" value="P:DNA damage checkpoint signaling"/>
    <property type="evidence" value="ECO:0000250"/>
    <property type="project" value="UniProtKB"/>
</dbReference>
<dbReference type="GO" id="GO:0006281">
    <property type="term" value="P:DNA repair"/>
    <property type="evidence" value="ECO:0000318"/>
    <property type="project" value="GO_Central"/>
</dbReference>
<dbReference type="GO" id="GO:0051081">
    <property type="term" value="P:nuclear membrane disassembly"/>
    <property type="evidence" value="ECO:0000250"/>
    <property type="project" value="UniProtKB"/>
</dbReference>
<dbReference type="GO" id="GO:0018105">
    <property type="term" value="P:peptidyl-serine phosphorylation"/>
    <property type="evidence" value="ECO:0000314"/>
    <property type="project" value="UniProtKB"/>
</dbReference>
<dbReference type="GO" id="GO:0000723">
    <property type="term" value="P:telomere maintenance"/>
    <property type="evidence" value="ECO:0000318"/>
    <property type="project" value="GO_Central"/>
</dbReference>
<dbReference type="CDD" id="cd00892">
    <property type="entry name" value="PIKKc_ATR"/>
    <property type="match status" value="1"/>
</dbReference>
<dbReference type="FunFam" id="1.10.1070.11:FF:000009">
    <property type="entry name" value="Putative serine/threonine-protein kinase ATR"/>
    <property type="match status" value="1"/>
</dbReference>
<dbReference type="FunFam" id="1.25.10.10:FF:000149">
    <property type="entry name" value="Serine/threonine-protein kinase ATR"/>
    <property type="match status" value="1"/>
</dbReference>
<dbReference type="FunFam" id="1.25.40.10:FF:000142">
    <property type="entry name" value="Serine/threonine-protein kinase ATR"/>
    <property type="match status" value="1"/>
</dbReference>
<dbReference type="FunFam" id="3.30.1010.10:FF:000011">
    <property type="entry name" value="serine/threonine-protein kinase ATR"/>
    <property type="match status" value="1"/>
</dbReference>
<dbReference type="Gene3D" id="1.25.10.10">
    <property type="entry name" value="Leucine-rich Repeat Variant"/>
    <property type="match status" value="2"/>
</dbReference>
<dbReference type="Gene3D" id="1.10.1070.11">
    <property type="entry name" value="Phosphatidylinositol 3-/4-kinase, catalytic domain"/>
    <property type="match status" value="1"/>
</dbReference>
<dbReference type="Gene3D" id="3.30.1010.10">
    <property type="entry name" value="Phosphatidylinositol 3-kinase Catalytic Subunit, Chain A, domain 4"/>
    <property type="match status" value="1"/>
</dbReference>
<dbReference type="Gene3D" id="1.25.40.10">
    <property type="entry name" value="Tetratricopeptide repeat domain"/>
    <property type="match status" value="1"/>
</dbReference>
<dbReference type="InterPro" id="IPR011989">
    <property type="entry name" value="ARM-like"/>
</dbReference>
<dbReference type="InterPro" id="IPR016024">
    <property type="entry name" value="ARM-type_fold"/>
</dbReference>
<dbReference type="InterPro" id="IPR056802">
    <property type="entry name" value="ATR-like_M-HEAT"/>
</dbReference>
<dbReference type="InterPro" id="IPR056803">
    <property type="entry name" value="ATR-like_N-HEAT"/>
</dbReference>
<dbReference type="InterPro" id="IPR050517">
    <property type="entry name" value="DDR_Repair_Kinase"/>
</dbReference>
<dbReference type="InterPro" id="IPR003152">
    <property type="entry name" value="FATC_dom"/>
</dbReference>
<dbReference type="InterPro" id="IPR011009">
    <property type="entry name" value="Kinase-like_dom_sf"/>
</dbReference>
<dbReference type="InterPro" id="IPR000403">
    <property type="entry name" value="PI3/4_kinase_cat_dom"/>
</dbReference>
<dbReference type="InterPro" id="IPR036940">
    <property type="entry name" value="PI3/4_kinase_cat_sf"/>
</dbReference>
<dbReference type="InterPro" id="IPR018936">
    <property type="entry name" value="PI3/4_kinase_CS"/>
</dbReference>
<dbReference type="InterPro" id="IPR003151">
    <property type="entry name" value="PIK-rel_kinase_FAT"/>
</dbReference>
<dbReference type="InterPro" id="IPR014009">
    <property type="entry name" value="PIK_FAT"/>
</dbReference>
<dbReference type="InterPro" id="IPR011990">
    <property type="entry name" value="TPR-like_helical_dom_sf"/>
</dbReference>
<dbReference type="InterPro" id="IPR012993">
    <property type="entry name" value="UME"/>
</dbReference>
<dbReference type="PANTHER" id="PTHR11139">
    <property type="entry name" value="ATAXIA TELANGIECTASIA MUTATED ATM -RELATED"/>
    <property type="match status" value="1"/>
</dbReference>
<dbReference type="PANTHER" id="PTHR11139:SF69">
    <property type="entry name" value="SERINE_THREONINE-PROTEIN KINASE ATR"/>
    <property type="match status" value="1"/>
</dbReference>
<dbReference type="Pfam" id="PF02259">
    <property type="entry name" value="FAT"/>
    <property type="match status" value="1"/>
</dbReference>
<dbReference type="Pfam" id="PF02260">
    <property type="entry name" value="FATC"/>
    <property type="match status" value="1"/>
</dbReference>
<dbReference type="Pfam" id="PF23593">
    <property type="entry name" value="HEAT_ATR"/>
    <property type="match status" value="1"/>
</dbReference>
<dbReference type="Pfam" id="PF25030">
    <property type="entry name" value="M-HEAT_ATR"/>
    <property type="match status" value="1"/>
</dbReference>
<dbReference type="Pfam" id="PF25032">
    <property type="entry name" value="N-HEAT_ATR"/>
    <property type="match status" value="1"/>
</dbReference>
<dbReference type="Pfam" id="PF00454">
    <property type="entry name" value="PI3_PI4_kinase"/>
    <property type="match status" value="1"/>
</dbReference>
<dbReference type="Pfam" id="PF08064">
    <property type="entry name" value="UME"/>
    <property type="match status" value="1"/>
</dbReference>
<dbReference type="SMART" id="SM01343">
    <property type="entry name" value="FATC"/>
    <property type="match status" value="1"/>
</dbReference>
<dbReference type="SMART" id="SM00146">
    <property type="entry name" value="PI3Kc"/>
    <property type="match status" value="1"/>
</dbReference>
<dbReference type="SMART" id="SM00802">
    <property type="entry name" value="UME"/>
    <property type="match status" value="1"/>
</dbReference>
<dbReference type="SUPFAM" id="SSF48371">
    <property type="entry name" value="ARM repeat"/>
    <property type="match status" value="1"/>
</dbReference>
<dbReference type="SUPFAM" id="SSF56112">
    <property type="entry name" value="Protein kinase-like (PK-like)"/>
    <property type="match status" value="1"/>
</dbReference>
<dbReference type="SUPFAM" id="SSF48452">
    <property type="entry name" value="TPR-like"/>
    <property type="match status" value="1"/>
</dbReference>
<dbReference type="PROSITE" id="PS51189">
    <property type="entry name" value="FAT"/>
    <property type="match status" value="1"/>
</dbReference>
<dbReference type="PROSITE" id="PS51190">
    <property type="entry name" value="FATC"/>
    <property type="match status" value="1"/>
</dbReference>
<dbReference type="PROSITE" id="PS00916">
    <property type="entry name" value="PI3_4_KINASE_2"/>
    <property type="match status" value="1"/>
</dbReference>
<dbReference type="PROSITE" id="PS50290">
    <property type="entry name" value="PI3_4_KINASE_3"/>
    <property type="match status" value="1"/>
</dbReference>
<accession>Q9DE14</accession>
<accession>Q5EGL8</accession>
<accession>Q9DDK7</accession>